<name>CYB_POLSP</name>
<geneLocation type="mitochondrion"/>
<sequence>MANIRKTHPLLKIINGAFIDLPAPSNISVWWNSGSLLGLCLITQILTGLFLAMHYTADISTAFSSIAHICRDVNYGWLIRNIHANGASFFFICLYLHVARGMYYGSYLYKETWNIGVVLLLLTMMTAFVGYVLPWGQMSFWGATVITNLLSAFPYIGDTLVQWIWGGFSVDNATLTRFFAFHFLLPFVIAGASMIHLLFLHQTGSNNPTGLNSDADKVPFHPYFSYKDLLGFILMLIGLTAIALFSPNLLGDPDNFTPANPLVTPPHIKPEWYFLFAYAILRSIPNKLGGVLALLFSILVLMLVPILHTSKQRGNTFRPLSQILFWTLVADMLVLTWIGGQPVEHPFVLIGQVASTIYFALFLIALPLTGWLENKILNWN</sequence>
<keyword id="KW-0249">Electron transport</keyword>
<keyword id="KW-0349">Heme</keyword>
<keyword id="KW-0408">Iron</keyword>
<keyword id="KW-0472">Membrane</keyword>
<keyword id="KW-0479">Metal-binding</keyword>
<keyword id="KW-0496">Mitochondrion</keyword>
<keyword id="KW-0999">Mitochondrion inner membrane</keyword>
<keyword id="KW-0679">Respiratory chain</keyword>
<keyword id="KW-0812">Transmembrane</keyword>
<keyword id="KW-1133">Transmembrane helix</keyword>
<keyword id="KW-0813">Transport</keyword>
<keyword id="KW-0830">Ubiquinone</keyword>
<protein>
    <recommendedName>
        <fullName>Cytochrome b</fullName>
    </recommendedName>
    <alternativeName>
        <fullName>Complex III subunit 3</fullName>
    </alternativeName>
    <alternativeName>
        <fullName>Complex III subunit III</fullName>
    </alternativeName>
    <alternativeName>
        <fullName>Cytochrome b-c1 complex subunit 3</fullName>
    </alternativeName>
    <alternativeName>
        <fullName>Ubiquinol-cytochrome-c reductase complex cytochrome b subunit</fullName>
    </alternativeName>
</protein>
<dbReference type="EMBL" id="AJ245841">
    <property type="protein sequence ID" value="CAC19613.1"/>
    <property type="molecule type" value="Genomic_DNA"/>
</dbReference>
<dbReference type="SMR" id="Q9G2S5"/>
<dbReference type="GO" id="GO:0005743">
    <property type="term" value="C:mitochondrial inner membrane"/>
    <property type="evidence" value="ECO:0007669"/>
    <property type="project" value="UniProtKB-SubCell"/>
</dbReference>
<dbReference type="GO" id="GO:0045275">
    <property type="term" value="C:respiratory chain complex III"/>
    <property type="evidence" value="ECO:0007669"/>
    <property type="project" value="InterPro"/>
</dbReference>
<dbReference type="GO" id="GO:0046872">
    <property type="term" value="F:metal ion binding"/>
    <property type="evidence" value="ECO:0007669"/>
    <property type="project" value="UniProtKB-KW"/>
</dbReference>
<dbReference type="GO" id="GO:0008121">
    <property type="term" value="F:ubiquinol-cytochrome-c reductase activity"/>
    <property type="evidence" value="ECO:0007669"/>
    <property type="project" value="InterPro"/>
</dbReference>
<dbReference type="GO" id="GO:0006122">
    <property type="term" value="P:mitochondrial electron transport, ubiquinol to cytochrome c"/>
    <property type="evidence" value="ECO:0007669"/>
    <property type="project" value="TreeGrafter"/>
</dbReference>
<dbReference type="CDD" id="cd00290">
    <property type="entry name" value="cytochrome_b_C"/>
    <property type="match status" value="1"/>
</dbReference>
<dbReference type="CDD" id="cd00284">
    <property type="entry name" value="Cytochrome_b_N"/>
    <property type="match status" value="1"/>
</dbReference>
<dbReference type="FunFam" id="1.20.810.10:FF:000002">
    <property type="entry name" value="Cytochrome b"/>
    <property type="match status" value="1"/>
</dbReference>
<dbReference type="Gene3D" id="1.20.810.10">
    <property type="entry name" value="Cytochrome Bc1 Complex, Chain C"/>
    <property type="match status" value="1"/>
</dbReference>
<dbReference type="InterPro" id="IPR005798">
    <property type="entry name" value="Cyt_b/b6_C"/>
</dbReference>
<dbReference type="InterPro" id="IPR036150">
    <property type="entry name" value="Cyt_b/b6_C_sf"/>
</dbReference>
<dbReference type="InterPro" id="IPR005797">
    <property type="entry name" value="Cyt_b/b6_N"/>
</dbReference>
<dbReference type="InterPro" id="IPR027387">
    <property type="entry name" value="Cytb/b6-like_sf"/>
</dbReference>
<dbReference type="InterPro" id="IPR030689">
    <property type="entry name" value="Cytochrome_b"/>
</dbReference>
<dbReference type="InterPro" id="IPR048260">
    <property type="entry name" value="Cytochrome_b_C_euk/bac"/>
</dbReference>
<dbReference type="InterPro" id="IPR048259">
    <property type="entry name" value="Cytochrome_b_N_euk/bac"/>
</dbReference>
<dbReference type="InterPro" id="IPR016174">
    <property type="entry name" value="Di-haem_cyt_TM"/>
</dbReference>
<dbReference type="PANTHER" id="PTHR19271">
    <property type="entry name" value="CYTOCHROME B"/>
    <property type="match status" value="1"/>
</dbReference>
<dbReference type="PANTHER" id="PTHR19271:SF16">
    <property type="entry name" value="CYTOCHROME B"/>
    <property type="match status" value="1"/>
</dbReference>
<dbReference type="Pfam" id="PF00032">
    <property type="entry name" value="Cytochrom_B_C"/>
    <property type="match status" value="1"/>
</dbReference>
<dbReference type="Pfam" id="PF00033">
    <property type="entry name" value="Cytochrome_B"/>
    <property type="match status" value="1"/>
</dbReference>
<dbReference type="PIRSF" id="PIRSF038885">
    <property type="entry name" value="COB"/>
    <property type="match status" value="1"/>
</dbReference>
<dbReference type="SUPFAM" id="SSF81648">
    <property type="entry name" value="a domain/subunit of cytochrome bc1 complex (Ubiquinol-cytochrome c reductase)"/>
    <property type="match status" value="1"/>
</dbReference>
<dbReference type="SUPFAM" id="SSF81342">
    <property type="entry name" value="Transmembrane di-heme cytochromes"/>
    <property type="match status" value="1"/>
</dbReference>
<dbReference type="PROSITE" id="PS51003">
    <property type="entry name" value="CYTB_CTER"/>
    <property type="match status" value="1"/>
</dbReference>
<dbReference type="PROSITE" id="PS51002">
    <property type="entry name" value="CYTB_NTER"/>
    <property type="match status" value="1"/>
</dbReference>
<organism>
    <name type="scientific">Polyodon spathula</name>
    <name type="common">North American paddlefish</name>
    <name type="synonym">Squalus spathula</name>
    <dbReference type="NCBI Taxonomy" id="7913"/>
    <lineage>
        <taxon>Eukaryota</taxon>
        <taxon>Metazoa</taxon>
        <taxon>Chordata</taxon>
        <taxon>Craniata</taxon>
        <taxon>Vertebrata</taxon>
        <taxon>Euteleostomi</taxon>
        <taxon>Actinopterygii</taxon>
        <taxon>Chondrostei</taxon>
        <taxon>Acipenseriformes</taxon>
        <taxon>Polyodontidae</taxon>
        <taxon>Polyodon</taxon>
    </lineage>
</organism>
<proteinExistence type="inferred from homology"/>
<gene>
    <name type="primary">mt-cyb</name>
    <name type="synonym">cob</name>
    <name type="synonym">cytb</name>
    <name type="synonym">mtcyb</name>
</gene>
<evidence type="ECO:0000250" key="1"/>
<evidence type="ECO:0000250" key="2">
    <source>
        <dbReference type="UniProtKB" id="P00157"/>
    </source>
</evidence>
<evidence type="ECO:0000255" key="3">
    <source>
        <dbReference type="PROSITE-ProRule" id="PRU00967"/>
    </source>
</evidence>
<evidence type="ECO:0000255" key="4">
    <source>
        <dbReference type="PROSITE-ProRule" id="PRU00968"/>
    </source>
</evidence>
<accession>Q9G2S5</accession>
<feature type="chain" id="PRO_0000061424" description="Cytochrome b">
    <location>
        <begin position="1"/>
        <end position="380"/>
    </location>
</feature>
<feature type="transmembrane region" description="Helical" evidence="2">
    <location>
        <begin position="33"/>
        <end position="53"/>
    </location>
</feature>
<feature type="transmembrane region" description="Helical" evidence="2">
    <location>
        <begin position="77"/>
        <end position="98"/>
    </location>
</feature>
<feature type="transmembrane region" description="Helical" evidence="2">
    <location>
        <begin position="113"/>
        <end position="133"/>
    </location>
</feature>
<feature type="transmembrane region" description="Helical" evidence="2">
    <location>
        <begin position="178"/>
        <end position="198"/>
    </location>
</feature>
<feature type="transmembrane region" description="Helical" evidence="2">
    <location>
        <begin position="226"/>
        <end position="246"/>
    </location>
</feature>
<feature type="transmembrane region" description="Helical" evidence="2">
    <location>
        <begin position="288"/>
        <end position="308"/>
    </location>
</feature>
<feature type="transmembrane region" description="Helical" evidence="2">
    <location>
        <begin position="320"/>
        <end position="340"/>
    </location>
</feature>
<feature type="transmembrane region" description="Helical" evidence="2">
    <location>
        <begin position="347"/>
        <end position="367"/>
    </location>
</feature>
<feature type="binding site" description="axial binding residue" evidence="2">
    <location>
        <position position="83"/>
    </location>
    <ligand>
        <name>heme b</name>
        <dbReference type="ChEBI" id="CHEBI:60344"/>
        <label>b562</label>
    </ligand>
    <ligandPart>
        <name>Fe</name>
        <dbReference type="ChEBI" id="CHEBI:18248"/>
    </ligandPart>
</feature>
<feature type="binding site" description="axial binding residue" evidence="2">
    <location>
        <position position="97"/>
    </location>
    <ligand>
        <name>heme b</name>
        <dbReference type="ChEBI" id="CHEBI:60344"/>
        <label>b566</label>
    </ligand>
    <ligandPart>
        <name>Fe</name>
        <dbReference type="ChEBI" id="CHEBI:18248"/>
    </ligandPart>
</feature>
<feature type="binding site" description="axial binding residue" evidence="2">
    <location>
        <position position="182"/>
    </location>
    <ligand>
        <name>heme b</name>
        <dbReference type="ChEBI" id="CHEBI:60344"/>
        <label>b562</label>
    </ligand>
    <ligandPart>
        <name>Fe</name>
        <dbReference type="ChEBI" id="CHEBI:18248"/>
    </ligandPart>
</feature>
<feature type="binding site" description="axial binding residue" evidence="2">
    <location>
        <position position="196"/>
    </location>
    <ligand>
        <name>heme b</name>
        <dbReference type="ChEBI" id="CHEBI:60344"/>
        <label>b566</label>
    </ligand>
    <ligandPart>
        <name>Fe</name>
        <dbReference type="ChEBI" id="CHEBI:18248"/>
    </ligandPart>
</feature>
<feature type="binding site" evidence="2">
    <location>
        <position position="201"/>
    </location>
    <ligand>
        <name>a ubiquinone</name>
        <dbReference type="ChEBI" id="CHEBI:16389"/>
    </ligand>
</feature>
<comment type="function">
    <text evidence="2">Component of the ubiquinol-cytochrome c reductase complex (complex III or cytochrome b-c1 complex) that is part of the mitochondrial respiratory chain. The b-c1 complex mediates electron transfer from ubiquinol to cytochrome c. Contributes to the generation of a proton gradient across the mitochondrial membrane that is then used for ATP synthesis.</text>
</comment>
<comment type="cofactor">
    <cofactor evidence="2">
        <name>heme b</name>
        <dbReference type="ChEBI" id="CHEBI:60344"/>
    </cofactor>
    <text evidence="2">Binds 2 heme b groups non-covalently.</text>
</comment>
<comment type="subunit">
    <text evidence="2">The cytochrome bc1 complex contains 3 respiratory subunits (MT-CYB, CYC1 and UQCRFS1), 2 core proteins (UQCRC1 and UQCRC2) and probably 6 low-molecular weight proteins.</text>
</comment>
<comment type="subcellular location">
    <subcellularLocation>
        <location evidence="2">Mitochondrion inner membrane</location>
        <topology evidence="2">Multi-pass membrane protein</topology>
    </subcellularLocation>
</comment>
<comment type="miscellaneous">
    <text evidence="1">Heme 1 (or BL or b562) is low-potential and absorbs at about 562 nm, and heme 2 (or BH or b566) is high-potential and absorbs at about 566 nm.</text>
</comment>
<comment type="similarity">
    <text evidence="3 4">Belongs to the cytochrome b family.</text>
</comment>
<comment type="caution">
    <text evidence="2">The full-length protein contains only eight transmembrane helices, not nine as predicted by bioinformatics tools.</text>
</comment>
<reference key="1">
    <citation type="journal article" date="2000" name="Genetics">
        <title>Heteroplasmy in the mtDNA control region of sturgeon (Acipenser, Huso and Scaphirhynchus).</title>
        <authorList>
            <person name="Ludwig A."/>
            <person name="May B."/>
            <person name="Debus L."/>
            <person name="Jenneckens I."/>
        </authorList>
    </citation>
    <scope>NUCLEOTIDE SEQUENCE [GENOMIC DNA]</scope>
    <source>
        <tissue>Blood</tissue>
    </source>
</reference>